<reference key="1">
    <citation type="journal article" date="2009" name="BMC Genomics">
        <title>The complete genome sequence of Staphylothermus marinus reveals differences in sulfur metabolism among heterotrophic Crenarchaeota.</title>
        <authorList>
            <person name="Anderson I.J."/>
            <person name="Dharmarajan L."/>
            <person name="Rodriguez J."/>
            <person name="Hooper S."/>
            <person name="Porat I."/>
            <person name="Ulrich L.E."/>
            <person name="Elkins J.G."/>
            <person name="Mavromatis K."/>
            <person name="Sun H."/>
            <person name="Land M."/>
            <person name="Lapidus A."/>
            <person name="Lucas S."/>
            <person name="Barry K."/>
            <person name="Huber H."/>
            <person name="Zhulin I.B."/>
            <person name="Whitman W.B."/>
            <person name="Mukhopadhyay B."/>
            <person name="Woese C."/>
            <person name="Bristow J."/>
            <person name="Kyrpides N."/>
        </authorList>
    </citation>
    <scope>NUCLEOTIDE SEQUENCE [LARGE SCALE GENOMIC DNA]</scope>
    <source>
        <strain>ATCC 43588 / DSM 3639 / JCM 9404 / F1</strain>
    </source>
</reference>
<reference key="2">
    <citation type="journal article" date="2009" name="Stand. Genomic Sci.">
        <title>Complete genome sequence of Staphylothermus marinus Stetter and Fiala 1986 type strain F1.</title>
        <authorList>
            <person name="Anderson I.J."/>
            <person name="Sun H."/>
            <person name="Lapidus A."/>
            <person name="Copeland A."/>
            <person name="Glavina Del Rio T."/>
            <person name="Tice H."/>
            <person name="Dalin E."/>
            <person name="Lucas S."/>
            <person name="Barry K."/>
            <person name="Land M."/>
            <person name="Richardson P."/>
            <person name="Huber H."/>
            <person name="Kyrpides N.C."/>
        </authorList>
    </citation>
    <scope>NUCLEOTIDE SEQUENCE [LARGE SCALE GENOMIC DNA]</scope>
    <source>
        <strain>ATCC 43588 / DSM 3639 / JCM 9404 / F1</strain>
    </source>
</reference>
<organism>
    <name type="scientific">Staphylothermus marinus (strain ATCC 43588 / DSM 3639 / JCM 9404 / F1)</name>
    <dbReference type="NCBI Taxonomy" id="399550"/>
    <lineage>
        <taxon>Archaea</taxon>
        <taxon>Thermoproteota</taxon>
        <taxon>Thermoprotei</taxon>
        <taxon>Desulfurococcales</taxon>
        <taxon>Desulfurococcaceae</taxon>
        <taxon>Staphylothermus</taxon>
    </lineage>
</organism>
<feature type="chain" id="PRO_1000023291" description="Probable thymidylate kinase">
    <location>
        <begin position="1"/>
        <end position="199"/>
    </location>
</feature>
<feature type="binding site" evidence="1">
    <location>
        <begin position="13"/>
        <end position="20"/>
    </location>
    <ligand>
        <name>ATP</name>
        <dbReference type="ChEBI" id="CHEBI:30616"/>
    </ligand>
</feature>
<sequence>MSENNGFFLVLEGIDGAGKTSIAFKLRDFLVEKGFNVHYTYEPYNTLYVEALKKKYNEYRDAYLDALTYAADRLVHIRTEILPYLRRGYIVICDRYYYSSAAYQSAQGAPIEWVLEINKYALKPDLTIYLDVDPAIGVKRRKGLNTRFPEYEKLDFLYRVRENYLWLVDKGYMVLVDANREFDKVYRDVEKIVLEHLVF</sequence>
<name>KTHY_STAMF</name>
<comment type="catalytic activity">
    <reaction evidence="1">
        <text>dTMP + ATP = dTDP + ADP</text>
        <dbReference type="Rhea" id="RHEA:13517"/>
        <dbReference type="ChEBI" id="CHEBI:30616"/>
        <dbReference type="ChEBI" id="CHEBI:58369"/>
        <dbReference type="ChEBI" id="CHEBI:63528"/>
        <dbReference type="ChEBI" id="CHEBI:456216"/>
        <dbReference type="EC" id="2.7.4.9"/>
    </reaction>
</comment>
<comment type="similarity">
    <text evidence="1">Belongs to the thymidylate kinase family.</text>
</comment>
<dbReference type="EC" id="2.7.4.9" evidence="1"/>
<dbReference type="EMBL" id="CP000575">
    <property type="protein sequence ID" value="ABN69731.1"/>
    <property type="molecule type" value="Genomic_DNA"/>
</dbReference>
<dbReference type="RefSeq" id="WP_011838922.1">
    <property type="nucleotide sequence ID" value="NC_009033.1"/>
</dbReference>
<dbReference type="SMR" id="A3DM71"/>
<dbReference type="STRING" id="399550.Smar_0624"/>
<dbReference type="GeneID" id="4907378"/>
<dbReference type="KEGG" id="smr:Smar_0624"/>
<dbReference type="eggNOG" id="arCOG01891">
    <property type="taxonomic scope" value="Archaea"/>
</dbReference>
<dbReference type="HOGENOM" id="CLU_049131_1_3_2"/>
<dbReference type="OrthoDB" id="43083at2157"/>
<dbReference type="Proteomes" id="UP000000254">
    <property type="component" value="Chromosome"/>
</dbReference>
<dbReference type="GO" id="GO:0005737">
    <property type="term" value="C:cytoplasm"/>
    <property type="evidence" value="ECO:0007669"/>
    <property type="project" value="TreeGrafter"/>
</dbReference>
<dbReference type="GO" id="GO:0005524">
    <property type="term" value="F:ATP binding"/>
    <property type="evidence" value="ECO:0007669"/>
    <property type="project" value="UniProtKB-UniRule"/>
</dbReference>
<dbReference type="GO" id="GO:0004798">
    <property type="term" value="F:dTMP kinase activity"/>
    <property type="evidence" value="ECO:0007669"/>
    <property type="project" value="UniProtKB-UniRule"/>
</dbReference>
<dbReference type="GO" id="GO:0006233">
    <property type="term" value="P:dTDP biosynthetic process"/>
    <property type="evidence" value="ECO:0007669"/>
    <property type="project" value="InterPro"/>
</dbReference>
<dbReference type="GO" id="GO:0006235">
    <property type="term" value="P:dTTP biosynthetic process"/>
    <property type="evidence" value="ECO:0007669"/>
    <property type="project" value="UniProtKB-UniRule"/>
</dbReference>
<dbReference type="GO" id="GO:0006227">
    <property type="term" value="P:dUDP biosynthetic process"/>
    <property type="evidence" value="ECO:0007669"/>
    <property type="project" value="TreeGrafter"/>
</dbReference>
<dbReference type="CDD" id="cd01672">
    <property type="entry name" value="TMPK"/>
    <property type="match status" value="1"/>
</dbReference>
<dbReference type="Gene3D" id="3.40.50.300">
    <property type="entry name" value="P-loop containing nucleotide triphosphate hydrolases"/>
    <property type="match status" value="1"/>
</dbReference>
<dbReference type="HAMAP" id="MF_00165">
    <property type="entry name" value="Thymidylate_kinase"/>
    <property type="match status" value="1"/>
</dbReference>
<dbReference type="InterPro" id="IPR027417">
    <property type="entry name" value="P-loop_NTPase"/>
</dbReference>
<dbReference type="InterPro" id="IPR039430">
    <property type="entry name" value="Thymidylate_kin-like_dom"/>
</dbReference>
<dbReference type="InterPro" id="IPR018095">
    <property type="entry name" value="Thymidylate_kin_CS"/>
</dbReference>
<dbReference type="InterPro" id="IPR018094">
    <property type="entry name" value="Thymidylate_kinase"/>
</dbReference>
<dbReference type="NCBIfam" id="TIGR00041">
    <property type="entry name" value="DTMP_kinase"/>
    <property type="match status" value="1"/>
</dbReference>
<dbReference type="PANTHER" id="PTHR10344">
    <property type="entry name" value="THYMIDYLATE KINASE"/>
    <property type="match status" value="1"/>
</dbReference>
<dbReference type="PANTHER" id="PTHR10344:SF4">
    <property type="entry name" value="UMP-CMP KINASE 2, MITOCHONDRIAL"/>
    <property type="match status" value="1"/>
</dbReference>
<dbReference type="Pfam" id="PF02223">
    <property type="entry name" value="Thymidylate_kin"/>
    <property type="match status" value="1"/>
</dbReference>
<dbReference type="SUPFAM" id="SSF52540">
    <property type="entry name" value="P-loop containing nucleoside triphosphate hydrolases"/>
    <property type="match status" value="1"/>
</dbReference>
<dbReference type="PROSITE" id="PS01331">
    <property type="entry name" value="THYMIDYLATE_KINASE"/>
    <property type="match status" value="1"/>
</dbReference>
<protein>
    <recommendedName>
        <fullName evidence="1">Probable thymidylate kinase</fullName>
        <ecNumber evidence="1">2.7.4.9</ecNumber>
    </recommendedName>
    <alternativeName>
        <fullName evidence="1">dTMP kinase</fullName>
    </alternativeName>
</protein>
<proteinExistence type="inferred from homology"/>
<keyword id="KW-0067">ATP-binding</keyword>
<keyword id="KW-0418">Kinase</keyword>
<keyword id="KW-0545">Nucleotide biosynthesis</keyword>
<keyword id="KW-0547">Nucleotide-binding</keyword>
<keyword id="KW-1185">Reference proteome</keyword>
<keyword id="KW-0808">Transferase</keyword>
<accession>A3DM71</accession>
<gene>
    <name evidence="1" type="primary">tmk</name>
    <name type="ordered locus">Smar_0624</name>
</gene>
<evidence type="ECO:0000255" key="1">
    <source>
        <dbReference type="HAMAP-Rule" id="MF_00165"/>
    </source>
</evidence>